<dbReference type="EMBL" id="CR382122">
    <property type="protein sequence ID" value="CAH02152.1"/>
    <property type="molecule type" value="Genomic_DNA"/>
</dbReference>
<dbReference type="RefSeq" id="XP_451759.1">
    <property type="nucleotide sequence ID" value="XM_451759.1"/>
</dbReference>
<dbReference type="PDB" id="3J80">
    <property type="method" value="EM"/>
    <property type="resolution" value="3.75 A"/>
    <property type="chains" value="B=1-255"/>
</dbReference>
<dbReference type="PDB" id="3J81">
    <property type="method" value="EM"/>
    <property type="resolution" value="4.00 A"/>
    <property type="chains" value="B=1-255"/>
</dbReference>
<dbReference type="PDB" id="3JAM">
    <property type="method" value="EM"/>
    <property type="resolution" value="3.46 A"/>
    <property type="chains" value="B=1-255"/>
</dbReference>
<dbReference type="PDB" id="3JAP">
    <property type="method" value="EM"/>
    <property type="resolution" value="4.90 A"/>
    <property type="chains" value="B=1-255"/>
</dbReference>
<dbReference type="PDB" id="5IT7">
    <property type="method" value="EM"/>
    <property type="resolution" value="3.60 A"/>
    <property type="chains" value="B=20-233"/>
</dbReference>
<dbReference type="PDB" id="5IT9">
    <property type="method" value="EM"/>
    <property type="resolution" value="3.80 A"/>
    <property type="chains" value="B=20-233"/>
</dbReference>
<dbReference type="PDB" id="6FYX">
    <property type="method" value="EM"/>
    <property type="resolution" value="3.05 A"/>
    <property type="chains" value="B=1-255"/>
</dbReference>
<dbReference type="PDB" id="6FYY">
    <property type="method" value="EM"/>
    <property type="resolution" value="3.05 A"/>
    <property type="chains" value="B=1-255"/>
</dbReference>
<dbReference type="PDB" id="6GSM">
    <property type="method" value="EM"/>
    <property type="resolution" value="5.15 A"/>
    <property type="chains" value="B=3-233"/>
</dbReference>
<dbReference type="PDB" id="6GSN">
    <property type="method" value="EM"/>
    <property type="resolution" value="5.75 A"/>
    <property type="chains" value="B=3-233"/>
</dbReference>
<dbReference type="PDB" id="6UZ7">
    <property type="method" value="EM"/>
    <property type="resolution" value="3.60 A"/>
    <property type="chains" value="B=1-255"/>
</dbReference>
<dbReference type="PDB" id="8I7J">
    <property type="method" value="EM"/>
    <property type="resolution" value="4.60 A"/>
    <property type="chains" value="B=1-255"/>
</dbReference>
<dbReference type="PDB" id="8RW1">
    <property type="method" value="EM"/>
    <property type="resolution" value="3.35 A"/>
    <property type="chains" value="B=1-255"/>
</dbReference>
<dbReference type="PDB" id="8S8D">
    <property type="method" value="EM"/>
    <property type="resolution" value="3.45 A"/>
    <property type="chains" value="B=1-255"/>
</dbReference>
<dbReference type="PDB" id="8S8E">
    <property type="method" value="EM"/>
    <property type="resolution" value="3.85 A"/>
    <property type="chains" value="B=1-255"/>
</dbReference>
<dbReference type="PDB" id="8S8F">
    <property type="method" value="EM"/>
    <property type="resolution" value="3.95 A"/>
    <property type="chains" value="B=1-255"/>
</dbReference>
<dbReference type="PDB" id="8S8G">
    <property type="method" value="EM"/>
    <property type="resolution" value="4.00 A"/>
    <property type="chains" value="B=1-255"/>
</dbReference>
<dbReference type="PDB" id="8S8H">
    <property type="method" value="EM"/>
    <property type="resolution" value="4.00 A"/>
    <property type="chains" value="B=1-255"/>
</dbReference>
<dbReference type="PDB" id="8S8I">
    <property type="method" value="EM"/>
    <property type="resolution" value="4.30 A"/>
    <property type="chains" value="B=1-255"/>
</dbReference>
<dbReference type="PDB" id="8S8J">
    <property type="method" value="EM"/>
    <property type="resolution" value="4.70 A"/>
    <property type="chains" value="B=1-255"/>
</dbReference>
<dbReference type="PDB" id="8S8K">
    <property type="method" value="EM"/>
    <property type="resolution" value="4.00 A"/>
    <property type="chains" value="B=1-255"/>
</dbReference>
<dbReference type="PDBsum" id="3J80"/>
<dbReference type="PDBsum" id="3J81"/>
<dbReference type="PDBsum" id="3JAM"/>
<dbReference type="PDBsum" id="3JAP"/>
<dbReference type="PDBsum" id="5IT7"/>
<dbReference type="PDBsum" id="5IT9"/>
<dbReference type="PDBsum" id="6FYX"/>
<dbReference type="PDBsum" id="6FYY"/>
<dbReference type="PDBsum" id="6GSM"/>
<dbReference type="PDBsum" id="6GSN"/>
<dbReference type="PDBsum" id="6UZ7"/>
<dbReference type="PDBsum" id="8I7J"/>
<dbReference type="PDBsum" id="8RW1"/>
<dbReference type="PDBsum" id="8S8D"/>
<dbReference type="PDBsum" id="8S8E"/>
<dbReference type="PDBsum" id="8S8F"/>
<dbReference type="PDBsum" id="8S8G"/>
<dbReference type="PDBsum" id="8S8H"/>
<dbReference type="PDBsum" id="8S8I"/>
<dbReference type="PDBsum" id="8S8J"/>
<dbReference type="PDBsum" id="8S8K"/>
<dbReference type="EMDB" id="EMD-0057"/>
<dbReference type="EMDB" id="EMD-0058"/>
<dbReference type="EMDB" id="EMD-19541"/>
<dbReference type="EMDB" id="EMD-19801"/>
<dbReference type="EMDB" id="EMD-19802"/>
<dbReference type="EMDB" id="EMD-19803"/>
<dbReference type="EMDB" id="EMD-19804"/>
<dbReference type="EMDB" id="EMD-19805"/>
<dbReference type="EMDB" id="EMD-19806"/>
<dbReference type="EMDB" id="EMD-19807"/>
<dbReference type="EMDB" id="EMD-19808"/>
<dbReference type="EMDB" id="EMD-20952"/>
<dbReference type="EMDB" id="EMD-35216"/>
<dbReference type="EMDB" id="EMD-4327"/>
<dbReference type="EMDB" id="EMD-4328"/>
<dbReference type="EMDB" id="EMD-8123"/>
<dbReference type="EMDB" id="EMD-8124"/>
<dbReference type="SMR" id="Q6CWD0"/>
<dbReference type="FunCoup" id="Q6CWD0">
    <property type="interactions" value="1482"/>
</dbReference>
<dbReference type="STRING" id="284590.Q6CWD0"/>
<dbReference type="PaxDb" id="284590-Q6CWD0"/>
<dbReference type="KEGG" id="kla:KLLA0_B05060g"/>
<dbReference type="eggNOG" id="KOG1628">
    <property type="taxonomic scope" value="Eukaryota"/>
</dbReference>
<dbReference type="HOGENOM" id="CLU_062507_0_0_1"/>
<dbReference type="InParanoid" id="Q6CWD0"/>
<dbReference type="OMA" id="TRFKGHE"/>
<dbReference type="Proteomes" id="UP000000598">
    <property type="component" value="Chromosome B"/>
</dbReference>
<dbReference type="GO" id="GO:0022627">
    <property type="term" value="C:cytosolic small ribosomal subunit"/>
    <property type="evidence" value="ECO:0007669"/>
    <property type="project" value="UniProtKB-UniRule"/>
</dbReference>
<dbReference type="GO" id="GO:0003735">
    <property type="term" value="F:structural constituent of ribosome"/>
    <property type="evidence" value="ECO:0007669"/>
    <property type="project" value="UniProtKB-UniRule"/>
</dbReference>
<dbReference type="GO" id="GO:0006412">
    <property type="term" value="P:translation"/>
    <property type="evidence" value="ECO:0007669"/>
    <property type="project" value="UniProtKB-UniRule"/>
</dbReference>
<dbReference type="HAMAP" id="MF_03122">
    <property type="entry name" value="Ribosomal_eS1_euk"/>
    <property type="match status" value="1"/>
</dbReference>
<dbReference type="InterPro" id="IPR001593">
    <property type="entry name" value="Ribosomal_eS1"/>
</dbReference>
<dbReference type="InterPro" id="IPR018281">
    <property type="entry name" value="Ribosomal_eS1_CS"/>
</dbReference>
<dbReference type="InterPro" id="IPR027500">
    <property type="entry name" value="Ribosomal_eS1_euk"/>
</dbReference>
<dbReference type="PANTHER" id="PTHR11830">
    <property type="entry name" value="40S RIBOSOMAL PROTEIN S3A"/>
    <property type="match status" value="1"/>
</dbReference>
<dbReference type="Pfam" id="PF01015">
    <property type="entry name" value="Ribosomal_S3Ae"/>
    <property type="match status" value="1"/>
</dbReference>
<dbReference type="SMART" id="SM01397">
    <property type="entry name" value="Ribosomal_S3Ae"/>
    <property type="match status" value="1"/>
</dbReference>
<dbReference type="PROSITE" id="PS01191">
    <property type="entry name" value="RIBOSOMAL_S3AE"/>
    <property type="match status" value="1"/>
</dbReference>
<name>RS3A_KLULA</name>
<reference key="1">
    <citation type="journal article" date="2004" name="Nature">
        <title>Genome evolution in yeasts.</title>
        <authorList>
            <person name="Dujon B."/>
            <person name="Sherman D."/>
            <person name="Fischer G."/>
            <person name="Durrens P."/>
            <person name="Casaregola S."/>
            <person name="Lafontaine I."/>
            <person name="de Montigny J."/>
            <person name="Marck C."/>
            <person name="Neuveglise C."/>
            <person name="Talla E."/>
            <person name="Goffard N."/>
            <person name="Frangeul L."/>
            <person name="Aigle M."/>
            <person name="Anthouard V."/>
            <person name="Babour A."/>
            <person name="Barbe V."/>
            <person name="Barnay S."/>
            <person name="Blanchin S."/>
            <person name="Beckerich J.-M."/>
            <person name="Beyne E."/>
            <person name="Bleykasten C."/>
            <person name="Boisrame A."/>
            <person name="Boyer J."/>
            <person name="Cattolico L."/>
            <person name="Confanioleri F."/>
            <person name="de Daruvar A."/>
            <person name="Despons L."/>
            <person name="Fabre E."/>
            <person name="Fairhead C."/>
            <person name="Ferry-Dumazet H."/>
            <person name="Groppi A."/>
            <person name="Hantraye F."/>
            <person name="Hennequin C."/>
            <person name="Jauniaux N."/>
            <person name="Joyet P."/>
            <person name="Kachouri R."/>
            <person name="Kerrest A."/>
            <person name="Koszul R."/>
            <person name="Lemaire M."/>
            <person name="Lesur I."/>
            <person name="Ma L."/>
            <person name="Muller H."/>
            <person name="Nicaud J.-M."/>
            <person name="Nikolski M."/>
            <person name="Oztas S."/>
            <person name="Ozier-Kalogeropoulos O."/>
            <person name="Pellenz S."/>
            <person name="Potier S."/>
            <person name="Richard G.-F."/>
            <person name="Straub M.-L."/>
            <person name="Suleau A."/>
            <person name="Swennen D."/>
            <person name="Tekaia F."/>
            <person name="Wesolowski-Louvel M."/>
            <person name="Westhof E."/>
            <person name="Wirth B."/>
            <person name="Zeniou-Meyer M."/>
            <person name="Zivanovic Y."/>
            <person name="Bolotin-Fukuhara M."/>
            <person name="Thierry A."/>
            <person name="Bouchier C."/>
            <person name="Caudron B."/>
            <person name="Scarpelli C."/>
            <person name="Gaillardin C."/>
            <person name="Weissenbach J."/>
            <person name="Wincker P."/>
            <person name="Souciet J.-L."/>
        </authorList>
    </citation>
    <scope>NUCLEOTIDE SEQUENCE [LARGE SCALE GENOMIC DNA]</scope>
    <source>
        <strain>ATCC 8585 / CBS 2359 / DSM 70799 / NBRC 1267 / NRRL Y-1140 / WM37</strain>
    </source>
</reference>
<organism>
    <name type="scientific">Kluyveromyces lactis (strain ATCC 8585 / CBS 2359 / DSM 70799 / NBRC 1267 / NRRL Y-1140 / WM37)</name>
    <name type="common">Yeast</name>
    <name type="synonym">Candida sphaerica</name>
    <dbReference type="NCBI Taxonomy" id="284590"/>
    <lineage>
        <taxon>Eukaryota</taxon>
        <taxon>Fungi</taxon>
        <taxon>Dikarya</taxon>
        <taxon>Ascomycota</taxon>
        <taxon>Saccharomycotina</taxon>
        <taxon>Saccharomycetes</taxon>
        <taxon>Saccharomycetales</taxon>
        <taxon>Saccharomycetaceae</taxon>
        <taxon>Kluyveromyces</taxon>
    </lineage>
</organism>
<keyword id="KW-0002">3D-structure</keyword>
<keyword id="KW-0007">Acetylation</keyword>
<keyword id="KW-0963">Cytoplasm</keyword>
<keyword id="KW-1185">Reference proteome</keyword>
<keyword id="KW-0687">Ribonucleoprotein</keyword>
<keyword id="KW-0689">Ribosomal protein</keyword>
<feature type="initiator methionine" description="Removed" evidence="1">
    <location>
        <position position="1"/>
    </location>
</feature>
<feature type="chain" id="PRO_0000389379" description="Small ribosomal subunit protein eS1">
    <location>
        <begin position="2"/>
        <end position="255"/>
    </location>
</feature>
<feature type="modified residue" description="N-acetylalanine; partial" evidence="1">
    <location>
        <position position="2"/>
    </location>
</feature>
<feature type="turn" evidence="4">
    <location>
        <begin position="23"/>
        <end position="26"/>
    </location>
</feature>
<feature type="strand" evidence="4">
    <location>
        <begin position="27"/>
        <end position="33"/>
    </location>
</feature>
<feature type="strand" evidence="3">
    <location>
        <begin position="38"/>
        <end position="40"/>
    </location>
</feature>
<feature type="strand" evidence="4">
    <location>
        <begin position="42"/>
        <end position="49"/>
    </location>
</feature>
<feature type="strand" evidence="4">
    <location>
        <begin position="53"/>
        <end position="55"/>
    </location>
</feature>
<feature type="helix" evidence="4">
    <location>
        <begin position="57"/>
        <end position="61"/>
    </location>
</feature>
<feature type="strand" evidence="4">
    <location>
        <begin position="65"/>
        <end position="70"/>
    </location>
</feature>
<feature type="helix" evidence="4">
    <location>
        <begin position="71"/>
        <end position="74"/>
    </location>
</feature>
<feature type="turn" evidence="4">
    <location>
        <begin position="78"/>
        <end position="81"/>
    </location>
</feature>
<feature type="strand" evidence="4">
    <location>
        <begin position="82"/>
        <end position="91"/>
    </location>
</feature>
<feature type="strand" evidence="4">
    <location>
        <begin position="93"/>
        <end position="105"/>
    </location>
</feature>
<feature type="helix" evidence="4">
    <location>
        <begin position="107"/>
        <end position="113"/>
    </location>
</feature>
<feature type="strand" evidence="4">
    <location>
        <begin position="116"/>
        <end position="118"/>
    </location>
</feature>
<feature type="strand" evidence="4">
    <location>
        <begin position="120"/>
        <end position="128"/>
    </location>
</feature>
<feature type="strand" evidence="4">
    <location>
        <begin position="130"/>
        <end position="132"/>
    </location>
</feature>
<feature type="strand" evidence="4">
    <location>
        <begin position="134"/>
        <end position="142"/>
    </location>
</feature>
<feature type="helix" evidence="4">
    <location>
        <begin position="158"/>
        <end position="177"/>
    </location>
</feature>
<feature type="helix" evidence="4">
    <location>
        <begin position="181"/>
        <end position="188"/>
    </location>
</feature>
<feature type="turn" evidence="4">
    <location>
        <begin position="189"/>
        <end position="191"/>
    </location>
</feature>
<feature type="helix" evidence="4">
    <location>
        <begin position="192"/>
        <end position="200"/>
    </location>
</feature>
<feature type="turn" evidence="4">
    <location>
        <begin position="201"/>
        <end position="204"/>
    </location>
</feature>
<feature type="strand" evidence="4">
    <location>
        <begin position="208"/>
        <end position="213"/>
    </location>
</feature>
<feature type="strand" evidence="3">
    <location>
        <begin position="215"/>
        <end position="219"/>
    </location>
</feature>
<feature type="helix" evidence="4">
    <location>
        <begin position="225"/>
        <end position="230"/>
    </location>
</feature>
<protein>
    <recommendedName>
        <fullName evidence="1">Small ribosomal subunit protein eS1</fullName>
    </recommendedName>
    <alternativeName>
        <fullName evidence="2">40S ribosomal protein S1</fullName>
    </alternativeName>
</protein>
<evidence type="ECO:0000255" key="1">
    <source>
        <dbReference type="HAMAP-Rule" id="MF_03122"/>
    </source>
</evidence>
<evidence type="ECO:0000305" key="2"/>
<evidence type="ECO:0007829" key="3">
    <source>
        <dbReference type="PDB" id="3JAM"/>
    </source>
</evidence>
<evidence type="ECO:0007829" key="4">
    <source>
        <dbReference type="PDB" id="8RW1"/>
    </source>
</evidence>
<accession>Q6CWD0</accession>
<proteinExistence type="evidence at protein level"/>
<sequence length="255" mass="28918">MAVGKNKRLSKGKKGLKKRVVDPFTRKEWYDIKAPSTFENRNVGKTLVNKSVGLKNASDSLKGRVVEVCLADLQGSEDHSFRKVKLRVDEVQGKNLLTNFHGMDFTTDKLRSMVRKWQTLIEANVTVKTSDDYVLRIFAIAFTRKQANQVKRTSYAQSSHIRQIRKVISEILTREVQNSTLAQLTSKLIPEVINKEIENATKDIFPLQNVHIRKVKLLKQPKFDLGSLLSLHGEASAEEKGKKVAGFKDEILETV</sequence>
<gene>
    <name evidence="1" type="primary">RPS1</name>
    <name type="ordered locus">KLLA0B05060g</name>
</gene>
<comment type="subunit">
    <text evidence="1">Component of the small ribosomal subunit. Mature ribosomes consist of a small (40S) and a large (60S) subunit. The 40S subunit contains about 33 different proteins and 1 molecule of RNA (18S). The 60S subunit contains about 49 different proteins and 3 molecules of RNA (25S, 5.8S and 5S).</text>
</comment>
<comment type="subcellular location">
    <subcellularLocation>
        <location evidence="1">Cytoplasm</location>
    </subcellularLocation>
</comment>
<comment type="similarity">
    <text evidence="1">Belongs to the eukaryotic ribosomal protein eS1 family.</text>
</comment>